<dbReference type="EMBL" id="CP000050">
    <property type="protein sequence ID" value="AAY49781.1"/>
    <property type="molecule type" value="Genomic_DNA"/>
</dbReference>
<dbReference type="RefSeq" id="WP_011036690.1">
    <property type="nucleotide sequence ID" value="NZ_CP155948.1"/>
</dbReference>
<dbReference type="SMR" id="Q4UT42"/>
<dbReference type="DNASU" id="1001927"/>
<dbReference type="KEGG" id="xcb:XC_2732"/>
<dbReference type="HOGENOM" id="CLU_180796_4_2_6"/>
<dbReference type="Proteomes" id="UP000000420">
    <property type="component" value="Chromosome"/>
</dbReference>
<dbReference type="Gene3D" id="1.20.5.300">
    <property type="match status" value="1"/>
</dbReference>
<dbReference type="HAMAP" id="MF_00715">
    <property type="entry name" value="SlyX"/>
    <property type="match status" value="1"/>
</dbReference>
<dbReference type="InterPro" id="IPR007236">
    <property type="entry name" value="SlyX"/>
</dbReference>
<dbReference type="NCBIfam" id="NF002024">
    <property type="entry name" value="PRK00846.1"/>
    <property type="match status" value="1"/>
</dbReference>
<dbReference type="PANTHER" id="PTHR36508">
    <property type="entry name" value="PROTEIN SLYX"/>
    <property type="match status" value="1"/>
</dbReference>
<dbReference type="PANTHER" id="PTHR36508:SF1">
    <property type="entry name" value="PROTEIN SLYX"/>
    <property type="match status" value="1"/>
</dbReference>
<dbReference type="Pfam" id="PF04102">
    <property type="entry name" value="SlyX"/>
    <property type="match status" value="1"/>
</dbReference>
<protein>
    <recommendedName>
        <fullName evidence="1">Protein SlyX homolog</fullName>
    </recommendedName>
</protein>
<gene>
    <name evidence="1" type="primary">slyX</name>
    <name type="ordered locus">XC_2732</name>
</gene>
<sequence length="78" mass="8821">MHEQLSPRDQELEARLVELETRLSFQEQALTELSEALADARLTGARNAELIRHLLEDLGKVRSTLFADAADEPPPPHY</sequence>
<accession>Q4UT42</accession>
<name>SLYX_XANC8</name>
<proteinExistence type="inferred from homology"/>
<comment type="similarity">
    <text evidence="1">Belongs to the SlyX family.</text>
</comment>
<reference key="1">
    <citation type="journal article" date="2005" name="Genome Res.">
        <title>Comparative and functional genomic analyses of the pathogenicity of phytopathogen Xanthomonas campestris pv. campestris.</title>
        <authorList>
            <person name="Qian W."/>
            <person name="Jia Y."/>
            <person name="Ren S.-X."/>
            <person name="He Y.-Q."/>
            <person name="Feng J.-X."/>
            <person name="Lu L.-F."/>
            <person name="Sun Q."/>
            <person name="Ying G."/>
            <person name="Tang D.-J."/>
            <person name="Tang H."/>
            <person name="Wu W."/>
            <person name="Hao P."/>
            <person name="Wang L."/>
            <person name="Jiang B.-L."/>
            <person name="Zeng S."/>
            <person name="Gu W.-Y."/>
            <person name="Lu G."/>
            <person name="Rong L."/>
            <person name="Tian Y."/>
            <person name="Yao Z."/>
            <person name="Fu G."/>
            <person name="Chen B."/>
            <person name="Fang R."/>
            <person name="Qiang B."/>
            <person name="Chen Z."/>
            <person name="Zhao G.-P."/>
            <person name="Tang J.-L."/>
            <person name="He C."/>
        </authorList>
    </citation>
    <scope>NUCLEOTIDE SEQUENCE [LARGE SCALE GENOMIC DNA]</scope>
    <source>
        <strain>8004</strain>
    </source>
</reference>
<evidence type="ECO:0000255" key="1">
    <source>
        <dbReference type="HAMAP-Rule" id="MF_00715"/>
    </source>
</evidence>
<feature type="chain" id="PRO_0000227087" description="Protein SlyX homolog">
    <location>
        <begin position="1"/>
        <end position="78"/>
    </location>
</feature>
<organism>
    <name type="scientific">Xanthomonas campestris pv. campestris (strain 8004)</name>
    <dbReference type="NCBI Taxonomy" id="314565"/>
    <lineage>
        <taxon>Bacteria</taxon>
        <taxon>Pseudomonadati</taxon>
        <taxon>Pseudomonadota</taxon>
        <taxon>Gammaproteobacteria</taxon>
        <taxon>Lysobacterales</taxon>
        <taxon>Lysobacteraceae</taxon>
        <taxon>Xanthomonas</taxon>
    </lineage>
</organism>